<comment type="function">
    <text evidence="1 6 7 8">Protein that can both mediate the addition of adenosine 5'-monophosphate (AMP) to specific residues of target proteins (AMPylation), and the removal of the same modification from target proteins (de-AMPylation), depending on the context (PubMed:29089387). The side chain of Glu-247 determines which of the two opposing activities (AMPylase or de-AMPylase) will take place (By similarity). Acts as a key regulator of the unfolded protein response (UPR) by mediating AMPylation or de-AMPylation of Hsc70-3/BiP (PubMed:25395623, PubMed:29089387). In unstressed cells, acts as an adenylyltransferase by mediating AMPylation of Hsc70-3/BiP at 'Thr-518', thereby inactivating it (PubMed:29089387). In response to endoplasmic reticulum stress, acts as a phosphodiesterase by mediating removal of ATP (de-AMPylation) from Hsc70-3/BiP at 'Thr-518', leading to restore HSPA5/BiP activity (PubMed:29089387).</text>
</comment>
<comment type="catalytic activity">
    <reaction evidence="2">
        <text>L-tyrosyl-[protein] + ATP = O-(5'-adenylyl)-L-tyrosyl-[protein] + diphosphate</text>
        <dbReference type="Rhea" id="RHEA:54288"/>
        <dbReference type="Rhea" id="RHEA-COMP:10136"/>
        <dbReference type="Rhea" id="RHEA-COMP:13846"/>
        <dbReference type="ChEBI" id="CHEBI:30616"/>
        <dbReference type="ChEBI" id="CHEBI:33019"/>
        <dbReference type="ChEBI" id="CHEBI:46858"/>
        <dbReference type="ChEBI" id="CHEBI:83624"/>
        <dbReference type="EC" id="2.7.7.108"/>
    </reaction>
</comment>
<comment type="catalytic activity">
    <reaction evidence="7 8">
        <text>L-threonyl-[protein] + ATP = 3-O-(5'-adenylyl)-L-threonyl-[protein] + diphosphate</text>
        <dbReference type="Rhea" id="RHEA:54292"/>
        <dbReference type="Rhea" id="RHEA-COMP:11060"/>
        <dbReference type="Rhea" id="RHEA-COMP:13847"/>
        <dbReference type="ChEBI" id="CHEBI:30013"/>
        <dbReference type="ChEBI" id="CHEBI:30616"/>
        <dbReference type="ChEBI" id="CHEBI:33019"/>
        <dbReference type="ChEBI" id="CHEBI:138113"/>
        <dbReference type="EC" id="2.7.7.108"/>
    </reaction>
</comment>
<comment type="catalytic activity">
    <reaction evidence="8">
        <text>3-O-(5'-adenylyl)-L-threonyl-[protein] + H2O = L-threonyl-[protein] + AMP + H(+)</text>
        <dbReference type="Rhea" id="RHEA:55932"/>
        <dbReference type="Rhea" id="RHEA-COMP:11060"/>
        <dbReference type="Rhea" id="RHEA-COMP:13847"/>
        <dbReference type="ChEBI" id="CHEBI:15377"/>
        <dbReference type="ChEBI" id="CHEBI:15378"/>
        <dbReference type="ChEBI" id="CHEBI:30013"/>
        <dbReference type="ChEBI" id="CHEBI:138113"/>
        <dbReference type="ChEBI" id="CHEBI:456215"/>
    </reaction>
</comment>
<comment type="activity regulation">
    <text evidence="1 2">The side chain of Glu-247 determines which of the two opposing activities (AMPylase or de-AMPylase) will take place. In response to endoplasmic reticulum stress, mediates de-AMPylase activity (By similarity). Adenylyltransferase activity is inhibited by the inhibitory helix present at the N-terminus: Glu-247 binds ATP and competes with ATP-binding at Arg-386, thereby preventing adenylyltransferase activity (By similarity). In unstressed cells, disengagement of Glu-247 promotes adenylyltransferase activity (By similarity). Activation dissociates ATP-binding from Glu-247, allowing ordered binding of the entire ATP moiety with the alpha-phosphate in an orientation that is productive for accepting an incoming target hydroxyl side chain (By similarity).</text>
</comment>
<comment type="subunit">
    <text evidence="8">Homodimer; homodimerization may regulate adenylyltransferase and phosphodiesterase activities.</text>
</comment>
<comment type="subcellular location">
    <subcellularLocation>
        <location evidence="10">Membrane</location>
        <topology evidence="10">Single-pass membrane protein</topology>
    </subcellularLocation>
</comment>
<comment type="induction">
    <text evidence="7">Up-regulated in response to endoplasmic reticulum stress.</text>
</comment>
<comment type="domain">
    <text evidence="2">The fido domain mediates the adenylyltransferase activity.</text>
</comment>
<comment type="disruption phenotype">
    <text evidence="8">No visible phenotype. Flies are viable.</text>
</comment>
<comment type="similarity">
    <text evidence="10">Belongs to the fic family.</text>
</comment>
<comment type="caution">
    <text evidence="7 8">Was initially thought to mediate AMPylation of Hsc70-3/BiP at 'Thr-366' (PubMed:25395623). However, it was later shown that it catalyzes AMPylation of Hsc70-3/BiP at 'Thr-518'.</text>
</comment>
<accession>Q8SWV6</accession>
<accession>Q9VMD8</accession>
<gene>
    <name evidence="9 11" type="primary">Fic</name>
    <name type="ORF">CG9523</name>
</gene>
<name>FICD_DROME</name>
<dbReference type="EC" id="2.7.7.108" evidence="7 8"/>
<dbReference type="EC" id="3.1.4.-" evidence="8"/>
<dbReference type="EMBL" id="AE014134">
    <property type="protein sequence ID" value="AAF52381.2"/>
    <property type="molecule type" value="Genomic_DNA"/>
</dbReference>
<dbReference type="EMBL" id="AY095059">
    <property type="protein sequence ID" value="AAM11387.1"/>
    <property type="molecule type" value="mRNA"/>
</dbReference>
<dbReference type="RefSeq" id="NP_609026.1">
    <property type="nucleotide sequence ID" value="NM_135182.2"/>
</dbReference>
<dbReference type="SMR" id="Q8SWV6"/>
<dbReference type="BioGRID" id="60054">
    <property type="interactions" value="5"/>
</dbReference>
<dbReference type="FunCoup" id="Q8SWV6">
    <property type="interactions" value="265"/>
</dbReference>
<dbReference type="IntAct" id="Q8SWV6">
    <property type="interactions" value="4"/>
</dbReference>
<dbReference type="STRING" id="7227.FBpp0078887"/>
<dbReference type="PaxDb" id="7227-FBpp0078887"/>
<dbReference type="DNASU" id="33897"/>
<dbReference type="EnsemblMetazoa" id="FBtr0079257">
    <property type="protein sequence ID" value="FBpp0078887"/>
    <property type="gene ID" value="FBgn0263278"/>
</dbReference>
<dbReference type="GeneID" id="33897"/>
<dbReference type="KEGG" id="dme:Dmel_CG9523"/>
<dbReference type="UCSC" id="CG9523-RA">
    <property type="organism name" value="d. melanogaster"/>
</dbReference>
<dbReference type="AGR" id="FB:FBgn0263278"/>
<dbReference type="CTD" id="33897"/>
<dbReference type="FlyBase" id="FBgn0263278">
    <property type="gene designation" value="Fic"/>
</dbReference>
<dbReference type="VEuPathDB" id="VectorBase:FBgn0263278"/>
<dbReference type="eggNOG" id="KOG3824">
    <property type="taxonomic scope" value="Eukaryota"/>
</dbReference>
<dbReference type="GeneTree" id="ENSGT00390000008873"/>
<dbReference type="HOGENOM" id="CLU_040460_0_0_1"/>
<dbReference type="InParanoid" id="Q8SWV6"/>
<dbReference type="OMA" id="QLRCQLW"/>
<dbReference type="OrthoDB" id="439046at2759"/>
<dbReference type="PhylomeDB" id="Q8SWV6"/>
<dbReference type="BioGRID-ORCS" id="33897">
    <property type="hits" value="0 hits in 1 CRISPR screen"/>
</dbReference>
<dbReference type="ChiTaRS" id="Btk29A">
    <property type="organism name" value="fly"/>
</dbReference>
<dbReference type="GenomeRNAi" id="33897"/>
<dbReference type="PRO" id="PR:Q8SWV6"/>
<dbReference type="Proteomes" id="UP000000803">
    <property type="component" value="Chromosome 2L"/>
</dbReference>
<dbReference type="Bgee" id="FBgn0263278">
    <property type="expression patterns" value="Expressed in spermathecum and 98 other cell types or tissues"/>
</dbReference>
<dbReference type="GO" id="GO:0005886">
    <property type="term" value="C:plasma membrane"/>
    <property type="evidence" value="ECO:0000314"/>
    <property type="project" value="FlyBase"/>
</dbReference>
<dbReference type="GO" id="GO:0070733">
    <property type="term" value="F:AMPylase activity"/>
    <property type="evidence" value="ECO:0000314"/>
    <property type="project" value="UniProtKB"/>
</dbReference>
<dbReference type="GO" id="GO:0005524">
    <property type="term" value="F:ATP binding"/>
    <property type="evidence" value="ECO:0007669"/>
    <property type="project" value="UniProtKB-KW"/>
</dbReference>
<dbReference type="GO" id="GO:0030544">
    <property type="term" value="F:Hsp70 protein binding"/>
    <property type="evidence" value="ECO:0000353"/>
    <property type="project" value="UniProtKB"/>
</dbReference>
<dbReference type="GO" id="GO:0044603">
    <property type="term" value="F:protein adenylylhydrolase activity"/>
    <property type="evidence" value="ECO:0000314"/>
    <property type="project" value="UniProtKB"/>
</dbReference>
<dbReference type="GO" id="GO:0042803">
    <property type="term" value="F:protein homodimerization activity"/>
    <property type="evidence" value="ECO:0000314"/>
    <property type="project" value="UniProtKB"/>
</dbReference>
<dbReference type="GO" id="GO:0051087">
    <property type="term" value="F:protein-folding chaperone binding"/>
    <property type="evidence" value="ECO:0000314"/>
    <property type="project" value="UniProtKB"/>
</dbReference>
<dbReference type="GO" id="GO:0050908">
    <property type="term" value="P:detection of light stimulus involved in visual perception"/>
    <property type="evidence" value="ECO:0000315"/>
    <property type="project" value="FlyBase"/>
</dbReference>
<dbReference type="GO" id="GO:0051608">
    <property type="term" value="P:histamine transport"/>
    <property type="evidence" value="ECO:0000315"/>
    <property type="project" value="FlyBase"/>
</dbReference>
<dbReference type="GO" id="GO:0018117">
    <property type="term" value="P:protein adenylylation"/>
    <property type="evidence" value="ECO:0000314"/>
    <property type="project" value="UniProtKB"/>
</dbReference>
<dbReference type="GO" id="GO:0044602">
    <property type="term" value="P:protein deadenylylation"/>
    <property type="evidence" value="ECO:0000314"/>
    <property type="project" value="UniProtKB"/>
</dbReference>
<dbReference type="GO" id="GO:0034976">
    <property type="term" value="P:response to endoplasmic reticulum stress"/>
    <property type="evidence" value="ECO:0000314"/>
    <property type="project" value="UniProtKB"/>
</dbReference>
<dbReference type="GO" id="GO:0007632">
    <property type="term" value="P:visual behavior"/>
    <property type="evidence" value="ECO:0000315"/>
    <property type="project" value="FlyBase"/>
</dbReference>
<dbReference type="FunFam" id="1.10.3290.10:FF:000001">
    <property type="entry name" value="adenosine monophosphate-protein transferase FICD"/>
    <property type="match status" value="1"/>
</dbReference>
<dbReference type="FunFam" id="1.25.40.10:FF:000522">
    <property type="entry name" value="Protein adenylyltransferase Fic"/>
    <property type="match status" value="1"/>
</dbReference>
<dbReference type="Gene3D" id="1.10.3290.10">
    <property type="entry name" value="Fido-like domain"/>
    <property type="match status" value="1"/>
</dbReference>
<dbReference type="Gene3D" id="1.25.40.10">
    <property type="entry name" value="Tetratricopeptide repeat domain"/>
    <property type="match status" value="1"/>
</dbReference>
<dbReference type="InterPro" id="IPR003812">
    <property type="entry name" value="Fido"/>
</dbReference>
<dbReference type="InterPro" id="IPR036597">
    <property type="entry name" value="Fido-like_dom_sf"/>
</dbReference>
<dbReference type="InterPro" id="IPR040198">
    <property type="entry name" value="Fido_containing"/>
</dbReference>
<dbReference type="InterPro" id="IPR011990">
    <property type="entry name" value="TPR-like_helical_dom_sf"/>
</dbReference>
<dbReference type="PANTHER" id="PTHR13504">
    <property type="entry name" value="FIDO DOMAIN-CONTAINING PROTEIN DDB_G0283145"/>
    <property type="match status" value="1"/>
</dbReference>
<dbReference type="PANTHER" id="PTHR13504:SF34">
    <property type="entry name" value="PROTEIN ADENYLYLTRANSFERASE FICD"/>
    <property type="match status" value="1"/>
</dbReference>
<dbReference type="Pfam" id="PF02661">
    <property type="entry name" value="Fic"/>
    <property type="match status" value="1"/>
</dbReference>
<dbReference type="SUPFAM" id="SSF140931">
    <property type="entry name" value="Fic-like"/>
    <property type="match status" value="1"/>
</dbReference>
<dbReference type="SUPFAM" id="SSF48452">
    <property type="entry name" value="TPR-like"/>
    <property type="match status" value="1"/>
</dbReference>
<dbReference type="PROSITE" id="PS51459">
    <property type="entry name" value="FIDO"/>
    <property type="match status" value="1"/>
</dbReference>
<dbReference type="PROSITE" id="PS50293">
    <property type="entry name" value="TPR_REGION"/>
    <property type="match status" value="1"/>
</dbReference>
<keyword id="KW-0067">ATP-binding</keyword>
<keyword id="KW-0378">Hydrolase</keyword>
<keyword id="KW-0472">Membrane</keyword>
<keyword id="KW-0547">Nucleotide-binding</keyword>
<keyword id="KW-0548">Nucleotidyltransferase</keyword>
<keyword id="KW-1185">Reference proteome</keyword>
<keyword id="KW-0677">Repeat</keyword>
<keyword id="KW-0802">TPR repeat</keyword>
<keyword id="KW-0808">Transferase</keyword>
<keyword id="KW-0812">Transmembrane</keyword>
<keyword id="KW-1133">Transmembrane helix</keyword>
<protein>
    <recommendedName>
        <fullName>Protein adenylyltransferase Fic</fullName>
        <shortName evidence="9">dFic</shortName>
        <ecNumber evidence="7 8">2.7.7.108</ecNumber>
    </recommendedName>
    <alternativeName>
        <fullName evidence="10">De-AMPylase Fic</fullName>
        <ecNumber evidence="8">3.1.4.-</ecNumber>
    </alternativeName>
</protein>
<evidence type="ECO:0000250" key="1">
    <source>
        <dbReference type="UniProtKB" id="A0A061I403"/>
    </source>
</evidence>
<evidence type="ECO:0000250" key="2">
    <source>
        <dbReference type="UniProtKB" id="Q9BVA6"/>
    </source>
</evidence>
<evidence type="ECO:0000255" key="3"/>
<evidence type="ECO:0000255" key="4">
    <source>
        <dbReference type="PROSITE-ProRule" id="PRU00791"/>
    </source>
</evidence>
<evidence type="ECO:0000256" key="5">
    <source>
        <dbReference type="SAM" id="MobiDB-lite"/>
    </source>
</evidence>
<evidence type="ECO:0000269" key="6">
    <source>
    </source>
</evidence>
<evidence type="ECO:0000269" key="7">
    <source>
    </source>
</evidence>
<evidence type="ECO:0000269" key="8">
    <source>
    </source>
</evidence>
<evidence type="ECO:0000303" key="9">
    <source>
    </source>
</evidence>
<evidence type="ECO:0000305" key="10"/>
<evidence type="ECO:0000312" key="11">
    <source>
        <dbReference type="FlyBase" id="FBgn0263278"/>
    </source>
</evidence>
<reference key="1">
    <citation type="journal article" date="2000" name="Science">
        <title>The genome sequence of Drosophila melanogaster.</title>
        <authorList>
            <person name="Adams M.D."/>
            <person name="Celniker S.E."/>
            <person name="Holt R.A."/>
            <person name="Evans C.A."/>
            <person name="Gocayne J.D."/>
            <person name="Amanatides P.G."/>
            <person name="Scherer S.E."/>
            <person name="Li P.W."/>
            <person name="Hoskins R.A."/>
            <person name="Galle R.F."/>
            <person name="George R.A."/>
            <person name="Lewis S.E."/>
            <person name="Richards S."/>
            <person name="Ashburner M."/>
            <person name="Henderson S.N."/>
            <person name="Sutton G.G."/>
            <person name="Wortman J.R."/>
            <person name="Yandell M.D."/>
            <person name="Zhang Q."/>
            <person name="Chen L.X."/>
            <person name="Brandon R.C."/>
            <person name="Rogers Y.-H.C."/>
            <person name="Blazej R.G."/>
            <person name="Champe M."/>
            <person name="Pfeiffer B.D."/>
            <person name="Wan K.H."/>
            <person name="Doyle C."/>
            <person name="Baxter E.G."/>
            <person name="Helt G."/>
            <person name="Nelson C.R."/>
            <person name="Miklos G.L.G."/>
            <person name="Abril J.F."/>
            <person name="Agbayani A."/>
            <person name="An H.-J."/>
            <person name="Andrews-Pfannkoch C."/>
            <person name="Baldwin D."/>
            <person name="Ballew R.M."/>
            <person name="Basu A."/>
            <person name="Baxendale J."/>
            <person name="Bayraktaroglu L."/>
            <person name="Beasley E.M."/>
            <person name="Beeson K.Y."/>
            <person name="Benos P.V."/>
            <person name="Berman B.P."/>
            <person name="Bhandari D."/>
            <person name="Bolshakov S."/>
            <person name="Borkova D."/>
            <person name="Botchan M.R."/>
            <person name="Bouck J."/>
            <person name="Brokstein P."/>
            <person name="Brottier P."/>
            <person name="Burtis K.C."/>
            <person name="Busam D.A."/>
            <person name="Butler H."/>
            <person name="Cadieu E."/>
            <person name="Center A."/>
            <person name="Chandra I."/>
            <person name="Cherry J.M."/>
            <person name="Cawley S."/>
            <person name="Dahlke C."/>
            <person name="Davenport L.B."/>
            <person name="Davies P."/>
            <person name="de Pablos B."/>
            <person name="Delcher A."/>
            <person name="Deng Z."/>
            <person name="Mays A.D."/>
            <person name="Dew I."/>
            <person name="Dietz S.M."/>
            <person name="Dodson K."/>
            <person name="Doup L.E."/>
            <person name="Downes M."/>
            <person name="Dugan-Rocha S."/>
            <person name="Dunkov B.C."/>
            <person name="Dunn P."/>
            <person name="Durbin K.J."/>
            <person name="Evangelista C.C."/>
            <person name="Ferraz C."/>
            <person name="Ferriera S."/>
            <person name="Fleischmann W."/>
            <person name="Fosler C."/>
            <person name="Gabrielian A.E."/>
            <person name="Garg N.S."/>
            <person name="Gelbart W.M."/>
            <person name="Glasser K."/>
            <person name="Glodek A."/>
            <person name="Gong F."/>
            <person name="Gorrell J.H."/>
            <person name="Gu Z."/>
            <person name="Guan P."/>
            <person name="Harris M."/>
            <person name="Harris N.L."/>
            <person name="Harvey D.A."/>
            <person name="Heiman T.J."/>
            <person name="Hernandez J.R."/>
            <person name="Houck J."/>
            <person name="Hostin D."/>
            <person name="Houston K.A."/>
            <person name="Howland T.J."/>
            <person name="Wei M.-H."/>
            <person name="Ibegwam C."/>
            <person name="Jalali M."/>
            <person name="Kalush F."/>
            <person name="Karpen G.H."/>
            <person name="Ke Z."/>
            <person name="Kennison J.A."/>
            <person name="Ketchum K.A."/>
            <person name="Kimmel B.E."/>
            <person name="Kodira C.D."/>
            <person name="Kraft C.L."/>
            <person name="Kravitz S."/>
            <person name="Kulp D."/>
            <person name="Lai Z."/>
            <person name="Lasko P."/>
            <person name="Lei Y."/>
            <person name="Levitsky A.A."/>
            <person name="Li J.H."/>
            <person name="Li Z."/>
            <person name="Liang Y."/>
            <person name="Lin X."/>
            <person name="Liu X."/>
            <person name="Mattei B."/>
            <person name="McIntosh T.C."/>
            <person name="McLeod M.P."/>
            <person name="McPherson D."/>
            <person name="Merkulov G."/>
            <person name="Milshina N.V."/>
            <person name="Mobarry C."/>
            <person name="Morris J."/>
            <person name="Moshrefi A."/>
            <person name="Mount S.M."/>
            <person name="Moy M."/>
            <person name="Murphy B."/>
            <person name="Murphy L."/>
            <person name="Muzny D.M."/>
            <person name="Nelson D.L."/>
            <person name="Nelson D.R."/>
            <person name="Nelson K.A."/>
            <person name="Nixon K."/>
            <person name="Nusskern D.R."/>
            <person name="Pacleb J.M."/>
            <person name="Palazzolo M."/>
            <person name="Pittman G.S."/>
            <person name="Pan S."/>
            <person name="Pollard J."/>
            <person name="Puri V."/>
            <person name="Reese M.G."/>
            <person name="Reinert K."/>
            <person name="Remington K."/>
            <person name="Saunders R.D.C."/>
            <person name="Scheeler F."/>
            <person name="Shen H."/>
            <person name="Shue B.C."/>
            <person name="Siden-Kiamos I."/>
            <person name="Simpson M."/>
            <person name="Skupski M.P."/>
            <person name="Smith T.J."/>
            <person name="Spier E."/>
            <person name="Spradling A.C."/>
            <person name="Stapleton M."/>
            <person name="Strong R."/>
            <person name="Sun E."/>
            <person name="Svirskas R."/>
            <person name="Tector C."/>
            <person name="Turner R."/>
            <person name="Venter E."/>
            <person name="Wang A.H."/>
            <person name="Wang X."/>
            <person name="Wang Z.-Y."/>
            <person name="Wassarman D.A."/>
            <person name="Weinstock G.M."/>
            <person name="Weissenbach J."/>
            <person name="Williams S.M."/>
            <person name="Woodage T."/>
            <person name="Worley K.C."/>
            <person name="Wu D."/>
            <person name="Yang S."/>
            <person name="Yao Q.A."/>
            <person name="Ye J."/>
            <person name="Yeh R.-F."/>
            <person name="Zaveri J.S."/>
            <person name="Zhan M."/>
            <person name="Zhang G."/>
            <person name="Zhao Q."/>
            <person name="Zheng L."/>
            <person name="Zheng X.H."/>
            <person name="Zhong F.N."/>
            <person name="Zhong W."/>
            <person name="Zhou X."/>
            <person name="Zhu S.C."/>
            <person name="Zhu X."/>
            <person name="Smith H.O."/>
            <person name="Gibbs R.A."/>
            <person name="Myers E.W."/>
            <person name="Rubin G.M."/>
            <person name="Venter J.C."/>
        </authorList>
    </citation>
    <scope>NUCLEOTIDE SEQUENCE [LARGE SCALE GENOMIC DNA]</scope>
    <source>
        <strain>Berkeley</strain>
    </source>
</reference>
<reference key="2">
    <citation type="journal article" date="2002" name="Genome Biol.">
        <title>Annotation of the Drosophila melanogaster euchromatic genome: a systematic review.</title>
        <authorList>
            <person name="Misra S."/>
            <person name="Crosby M.A."/>
            <person name="Mungall C.J."/>
            <person name="Matthews B.B."/>
            <person name="Campbell K.S."/>
            <person name="Hradecky P."/>
            <person name="Huang Y."/>
            <person name="Kaminker J.S."/>
            <person name="Millburn G.H."/>
            <person name="Prochnik S.E."/>
            <person name="Smith C.D."/>
            <person name="Tupy J.L."/>
            <person name="Whitfield E.J."/>
            <person name="Bayraktaroglu L."/>
            <person name="Berman B.P."/>
            <person name="Bettencourt B.R."/>
            <person name="Celniker S.E."/>
            <person name="de Grey A.D.N.J."/>
            <person name="Drysdale R.A."/>
            <person name="Harris N.L."/>
            <person name="Richter J."/>
            <person name="Russo S."/>
            <person name="Schroeder A.J."/>
            <person name="Shu S.Q."/>
            <person name="Stapleton M."/>
            <person name="Yamada C."/>
            <person name="Ashburner M."/>
            <person name="Gelbart W.M."/>
            <person name="Rubin G.M."/>
            <person name="Lewis S.E."/>
        </authorList>
    </citation>
    <scope>GENOME REANNOTATION</scope>
    <source>
        <strain>Berkeley</strain>
    </source>
</reference>
<reference key="3">
    <citation type="journal article" date="2002" name="Genome Biol.">
        <title>A Drosophila full-length cDNA resource.</title>
        <authorList>
            <person name="Stapleton M."/>
            <person name="Carlson J.W."/>
            <person name="Brokstein P."/>
            <person name="Yu C."/>
            <person name="Champe M."/>
            <person name="George R.A."/>
            <person name="Guarin H."/>
            <person name="Kronmiller B."/>
            <person name="Pacleb J.M."/>
            <person name="Park S."/>
            <person name="Wan K.H."/>
            <person name="Rubin G.M."/>
            <person name="Celniker S.E."/>
        </authorList>
    </citation>
    <scope>NUCLEOTIDE SEQUENCE [LARGE SCALE MRNA]</scope>
    <source>
        <strain>Berkeley</strain>
        <tissue>Embryo</tissue>
    </source>
</reference>
<reference key="4">
    <citation type="journal article" date="2009" name="PLoS ONE">
        <title>Fido, a novel AMPylation domain common to fic, doc, and AvrB.</title>
        <authorList>
            <person name="Kinch L.N."/>
            <person name="Yarbrough M.L."/>
            <person name="Orth K."/>
            <person name="Grishin N.V."/>
        </authorList>
    </citation>
    <scope>FUNCTION</scope>
    <scope>ACTIVE SITE</scope>
    <scope>MUTAGENESIS OF HIS-375</scope>
</reference>
<reference key="5">
    <citation type="journal article" date="2014" name="J. Biol. Chem.">
        <title>Unfolded protein response-regulated Drosophila Fic (dFic) protein reversibly AMPylates BiP chaperone during endoplasmic reticulum homeostasis.</title>
        <authorList>
            <person name="Ham H."/>
            <person name="Woolery A.R."/>
            <person name="Tracy C."/>
            <person name="Stenesen D."/>
            <person name="Kraemer H."/>
            <person name="Orth K."/>
        </authorList>
    </citation>
    <scope>FUNCTION</scope>
    <scope>CATALYTIC ACTIVITY</scope>
    <scope>INDUCTION</scope>
    <scope>MUTAGENESIS OF GLU-247 AND HIS-375</scope>
</reference>
<reference key="6">
    <citation type="journal article" date="2017" name="J. Biol. Chem.">
        <title>Fic-mediated deAMPylation is not dependent on homodimerization and rescues toxic AMPylation in flies.</title>
        <authorList>
            <person name="Casey A.K."/>
            <person name="Moehlman A.T."/>
            <person name="Zhang J."/>
            <person name="Servage K.A."/>
            <person name="Kraemer H."/>
            <person name="Orth K."/>
        </authorList>
    </citation>
    <scope>FUNCTION</scope>
    <scope>CATALYTIC ACTIVITY</scope>
    <scope>SUBUNIT</scope>
    <scope>DISRUPTION PHENOTYPE</scope>
    <scope>MUTAGENESIS OF GLU-247; ILE-271 AND HIS-375</scope>
</reference>
<organism>
    <name type="scientific">Drosophila melanogaster</name>
    <name type="common">Fruit fly</name>
    <dbReference type="NCBI Taxonomy" id="7227"/>
    <lineage>
        <taxon>Eukaryota</taxon>
        <taxon>Metazoa</taxon>
        <taxon>Ecdysozoa</taxon>
        <taxon>Arthropoda</taxon>
        <taxon>Hexapoda</taxon>
        <taxon>Insecta</taxon>
        <taxon>Pterygota</taxon>
        <taxon>Neoptera</taxon>
        <taxon>Endopterygota</taxon>
        <taxon>Diptera</taxon>
        <taxon>Brachycera</taxon>
        <taxon>Muscomorpha</taxon>
        <taxon>Ephydroidea</taxon>
        <taxon>Drosophilidae</taxon>
        <taxon>Drosophila</taxon>
        <taxon>Sophophora</taxon>
    </lineage>
</organism>
<sequence>MGTEAEQPSPPAQQQDQENPPLCKAQNPKPARLYRFVLIFVAGSLAAWTFHALSSTNLVWKLRQLHHLPTAHYLQTRDEFALYSVEELNAFKEFYDKSVSDSVGASYTEAEQTNIKEALGALRMAQDLYLAGKDDKAARLFEHALALAPRHPEVLLRYGEFLEHNQRNIVLADQYYFQALTISPSNSEALANRQRTADVVQSLDERRLESLDSKRDALSAIHESNGALRRAKKEAYFQHIYHSVGIEGNTMTLAQTRSILETRMAVDGKSIDEHNEILGMDLAMKYINASLVQKIDITIKDILELHRRVLGHVDPIEGGEFRRNQVYVGGHIPPGPGDLALLMQRFERWLNSEHSSTLHPVNYAALAHYKLVHIHPFVDGNGRTSRLLMNTLLMRAGYPPVIIPKQQRSKYYHFLKLANEGDIRPFVRFIADCTEKTLDLYLWATSDLPQQIPMLIQTESEAGERLAQMQSPNVAQRSSILEFYESGSGDLP</sequence>
<feature type="chain" id="PRO_0000381785" description="Protein adenylyltransferase Fic">
    <location>
        <begin position="1"/>
        <end position="492"/>
    </location>
</feature>
<feature type="transmembrane region" description="Helical" evidence="3">
    <location>
        <begin position="33"/>
        <end position="55"/>
    </location>
</feature>
<feature type="repeat" description="TPR 1">
    <location>
        <begin position="118"/>
        <end position="151"/>
    </location>
</feature>
<feature type="repeat" description="TPR 2">
    <location>
        <begin position="152"/>
        <end position="186"/>
    </location>
</feature>
<feature type="domain" description="Fido" evidence="4">
    <location>
        <begin position="297"/>
        <end position="432"/>
    </location>
</feature>
<feature type="region of interest" description="Disordered" evidence="5">
    <location>
        <begin position="1"/>
        <end position="26"/>
    </location>
</feature>
<feature type="short sequence motif" description="Inhibitory (S/T)XXXE(G/N) motif">
    <location>
        <begin position="243"/>
        <end position="248"/>
    </location>
</feature>
<feature type="compositionally biased region" description="Low complexity" evidence="5">
    <location>
        <begin position="1"/>
        <end position="18"/>
    </location>
</feature>
<feature type="active site" evidence="6">
    <location>
        <position position="375"/>
    </location>
</feature>
<feature type="binding site" evidence="2">
    <location>
        <position position="247"/>
    </location>
    <ligand>
        <name>ATP</name>
        <dbReference type="ChEBI" id="CHEBI:30616"/>
    </ligand>
</feature>
<feature type="binding site" evidence="2">
    <location>
        <begin position="328"/>
        <end position="331"/>
    </location>
    <ligand>
        <name>ATP</name>
        <dbReference type="ChEBI" id="CHEBI:30616"/>
    </ligand>
</feature>
<feature type="binding site" evidence="2">
    <location>
        <begin position="379"/>
        <end position="386"/>
    </location>
    <ligand>
        <name>ATP</name>
        <dbReference type="ChEBI" id="CHEBI:30616"/>
    </ligand>
</feature>
<feature type="binding site" evidence="2">
    <location>
        <begin position="411"/>
        <end position="412"/>
    </location>
    <ligand>
        <name>ATP</name>
        <dbReference type="ChEBI" id="CHEBI:30616"/>
    </ligand>
</feature>
<feature type="binding site" evidence="2">
    <location>
        <position position="419"/>
    </location>
    <ligand>
        <name>ATP</name>
        <dbReference type="ChEBI" id="CHEBI:30616"/>
    </ligand>
</feature>
<feature type="site" description="Important for autoinhibition of adenylyltransferase activity" evidence="2">
    <location>
        <position position="247"/>
    </location>
</feature>
<feature type="mutagenesis site" description="Promotes adenylyltransferase activity. Overexpression is lethal in a Fic null background." evidence="7 8">
    <original>E</original>
    <variation>G</variation>
    <location>
        <position position="247"/>
    </location>
</feature>
<feature type="mutagenesis site" description="Disrupts homodimerization, leading to increased adenylyltransferase activity and reduced phosphodiesterase activity." evidence="8">
    <original>I</original>
    <variation>D</variation>
    <location>
        <position position="271"/>
    </location>
</feature>
<feature type="mutagenesis site" description="Abolishes adenylyltransferase and phosphodiesterase activities." evidence="6 8">
    <original>H</original>
    <variation>A</variation>
    <location>
        <position position="375"/>
    </location>
</feature>
<proteinExistence type="evidence at protein level"/>